<sequence>MAIAKAEILESIANMTVLELSELIKEMEEKFGVSAAAATVAVAAAPAAAAAVEEQTEFSVILTAAGDNKVNVIKVVRAVTGLGLKEAKDLVDGAPKTVKEGISKEDAESLKKQLVEAGAGCEIK</sequence>
<accession>Q82T74</accession>
<evidence type="ECO:0000255" key="1">
    <source>
        <dbReference type="HAMAP-Rule" id="MF_00368"/>
    </source>
</evidence>
<evidence type="ECO:0000305" key="2"/>
<proteinExistence type="inferred from homology"/>
<reference key="1">
    <citation type="journal article" date="2003" name="J. Bacteriol.">
        <title>Complete genome sequence of the ammonia-oxidizing bacterium and obligate chemolithoautotroph Nitrosomonas europaea.</title>
        <authorList>
            <person name="Chain P."/>
            <person name="Lamerdin J.E."/>
            <person name="Larimer F.W."/>
            <person name="Regala W."/>
            <person name="Lao V."/>
            <person name="Land M.L."/>
            <person name="Hauser L."/>
            <person name="Hooper A.B."/>
            <person name="Klotz M.G."/>
            <person name="Norton J."/>
            <person name="Sayavedra-Soto L.A."/>
            <person name="Arciero D.M."/>
            <person name="Hommes N.G."/>
            <person name="Whittaker M.M."/>
            <person name="Arp D.J."/>
        </authorList>
    </citation>
    <scope>NUCLEOTIDE SEQUENCE [LARGE SCALE GENOMIC DNA]</scope>
    <source>
        <strain>ATCC 19718 / CIP 103999 / KCTC 2705 / NBRC 14298</strain>
    </source>
</reference>
<organism>
    <name type="scientific">Nitrosomonas europaea (strain ATCC 19718 / CIP 103999 / KCTC 2705 / NBRC 14298)</name>
    <dbReference type="NCBI Taxonomy" id="228410"/>
    <lineage>
        <taxon>Bacteria</taxon>
        <taxon>Pseudomonadati</taxon>
        <taxon>Pseudomonadota</taxon>
        <taxon>Betaproteobacteria</taxon>
        <taxon>Nitrosomonadales</taxon>
        <taxon>Nitrosomonadaceae</taxon>
        <taxon>Nitrosomonas</taxon>
    </lineage>
</organism>
<dbReference type="EMBL" id="AL954747">
    <property type="protein sequence ID" value="CAD85958.1"/>
    <property type="molecule type" value="Genomic_DNA"/>
</dbReference>
<dbReference type="RefSeq" id="WP_011112560.1">
    <property type="nucleotide sequence ID" value="NC_004757.1"/>
</dbReference>
<dbReference type="SMR" id="Q82T74"/>
<dbReference type="STRING" id="228410.NE2047"/>
<dbReference type="GeneID" id="87105184"/>
<dbReference type="KEGG" id="neu:NE2047"/>
<dbReference type="eggNOG" id="COG0222">
    <property type="taxonomic scope" value="Bacteria"/>
</dbReference>
<dbReference type="HOGENOM" id="CLU_086499_3_2_4"/>
<dbReference type="OrthoDB" id="9811748at2"/>
<dbReference type="PhylomeDB" id="Q82T74"/>
<dbReference type="Proteomes" id="UP000001416">
    <property type="component" value="Chromosome"/>
</dbReference>
<dbReference type="GO" id="GO:0022625">
    <property type="term" value="C:cytosolic large ribosomal subunit"/>
    <property type="evidence" value="ECO:0007669"/>
    <property type="project" value="TreeGrafter"/>
</dbReference>
<dbReference type="GO" id="GO:0003729">
    <property type="term" value="F:mRNA binding"/>
    <property type="evidence" value="ECO:0007669"/>
    <property type="project" value="TreeGrafter"/>
</dbReference>
<dbReference type="GO" id="GO:0003735">
    <property type="term" value="F:structural constituent of ribosome"/>
    <property type="evidence" value="ECO:0007669"/>
    <property type="project" value="InterPro"/>
</dbReference>
<dbReference type="GO" id="GO:0006412">
    <property type="term" value="P:translation"/>
    <property type="evidence" value="ECO:0007669"/>
    <property type="project" value="UniProtKB-UniRule"/>
</dbReference>
<dbReference type="CDD" id="cd00387">
    <property type="entry name" value="Ribosomal_L7_L12"/>
    <property type="match status" value="1"/>
</dbReference>
<dbReference type="FunFam" id="3.30.1390.10:FF:000001">
    <property type="entry name" value="50S ribosomal protein L7/L12"/>
    <property type="match status" value="1"/>
</dbReference>
<dbReference type="Gene3D" id="3.30.1390.10">
    <property type="match status" value="1"/>
</dbReference>
<dbReference type="Gene3D" id="1.20.5.710">
    <property type="entry name" value="Single helix bin"/>
    <property type="match status" value="1"/>
</dbReference>
<dbReference type="HAMAP" id="MF_00368">
    <property type="entry name" value="Ribosomal_bL12"/>
    <property type="match status" value="1"/>
</dbReference>
<dbReference type="InterPro" id="IPR000206">
    <property type="entry name" value="Ribosomal_bL12"/>
</dbReference>
<dbReference type="InterPro" id="IPR013823">
    <property type="entry name" value="Ribosomal_bL12_C"/>
</dbReference>
<dbReference type="InterPro" id="IPR014719">
    <property type="entry name" value="Ribosomal_bL12_C/ClpS-like"/>
</dbReference>
<dbReference type="InterPro" id="IPR008932">
    <property type="entry name" value="Ribosomal_bL12_oligo"/>
</dbReference>
<dbReference type="InterPro" id="IPR036235">
    <property type="entry name" value="Ribosomal_bL12_oligo_N_sf"/>
</dbReference>
<dbReference type="NCBIfam" id="TIGR00855">
    <property type="entry name" value="L12"/>
    <property type="match status" value="1"/>
</dbReference>
<dbReference type="PANTHER" id="PTHR45987">
    <property type="entry name" value="39S RIBOSOMAL PROTEIN L12"/>
    <property type="match status" value="1"/>
</dbReference>
<dbReference type="PANTHER" id="PTHR45987:SF4">
    <property type="entry name" value="LARGE RIBOSOMAL SUBUNIT PROTEIN BL12M"/>
    <property type="match status" value="1"/>
</dbReference>
<dbReference type="Pfam" id="PF00542">
    <property type="entry name" value="Ribosomal_L12"/>
    <property type="match status" value="1"/>
</dbReference>
<dbReference type="Pfam" id="PF16320">
    <property type="entry name" value="Ribosomal_L12_N"/>
    <property type="match status" value="1"/>
</dbReference>
<dbReference type="SUPFAM" id="SSF54736">
    <property type="entry name" value="ClpS-like"/>
    <property type="match status" value="1"/>
</dbReference>
<dbReference type="SUPFAM" id="SSF48300">
    <property type="entry name" value="Ribosomal protein L7/12, oligomerisation (N-terminal) domain"/>
    <property type="match status" value="1"/>
</dbReference>
<comment type="function">
    <text evidence="1">Forms part of the ribosomal stalk which helps the ribosome interact with GTP-bound translation factors. Is thus essential for accurate translation.</text>
</comment>
<comment type="subunit">
    <text evidence="1">Homodimer. Part of the ribosomal stalk of the 50S ribosomal subunit. Forms a multimeric L10(L12)X complex, where L10 forms an elongated spine to which 2 to 4 L12 dimers bind in a sequential fashion. Binds GTP-bound translation factors.</text>
</comment>
<comment type="similarity">
    <text evidence="1">Belongs to the bacterial ribosomal protein bL12 family.</text>
</comment>
<gene>
    <name evidence="1" type="primary">rplL</name>
    <name type="ordered locus">NE2047</name>
</gene>
<protein>
    <recommendedName>
        <fullName evidence="1">Large ribosomal subunit protein bL12</fullName>
    </recommendedName>
    <alternativeName>
        <fullName evidence="2">50S ribosomal protein L7/L12</fullName>
    </alternativeName>
</protein>
<name>RL7_NITEU</name>
<keyword id="KW-1185">Reference proteome</keyword>
<keyword id="KW-0687">Ribonucleoprotein</keyword>
<keyword id="KW-0689">Ribosomal protein</keyword>
<feature type="chain" id="PRO_0000243453" description="Large ribosomal subunit protein bL12">
    <location>
        <begin position="1"/>
        <end position="124"/>
    </location>
</feature>